<organism>
    <name type="scientific">Methanococcus maripaludis (strain C5 / ATCC BAA-1333)</name>
    <dbReference type="NCBI Taxonomy" id="402880"/>
    <lineage>
        <taxon>Archaea</taxon>
        <taxon>Methanobacteriati</taxon>
        <taxon>Methanobacteriota</taxon>
        <taxon>Methanomada group</taxon>
        <taxon>Methanococci</taxon>
        <taxon>Methanococcales</taxon>
        <taxon>Methanococcaceae</taxon>
        <taxon>Methanococcus</taxon>
    </lineage>
</organism>
<comment type="function">
    <text evidence="1">Involved in allosteric regulation of aspartate carbamoyltransferase.</text>
</comment>
<comment type="cofactor">
    <cofactor evidence="1">
        <name>Zn(2+)</name>
        <dbReference type="ChEBI" id="CHEBI:29105"/>
    </cofactor>
    <text evidence="1">Binds 1 zinc ion per subunit.</text>
</comment>
<comment type="subunit">
    <text evidence="1">Contains catalytic and regulatory chains.</text>
</comment>
<comment type="similarity">
    <text evidence="1">Belongs to the PyrI family.</text>
</comment>
<keyword id="KW-0479">Metal-binding</keyword>
<keyword id="KW-0665">Pyrimidine biosynthesis</keyword>
<keyword id="KW-0862">Zinc</keyword>
<feature type="chain" id="PRO_1000000038" description="Aspartate carbamoyltransferase regulatory chain">
    <location>
        <begin position="1"/>
        <end position="148"/>
    </location>
</feature>
<feature type="binding site" evidence="1">
    <location>
        <position position="106"/>
    </location>
    <ligand>
        <name>Zn(2+)</name>
        <dbReference type="ChEBI" id="CHEBI:29105"/>
    </ligand>
</feature>
<feature type="binding site" evidence="1">
    <location>
        <position position="111"/>
    </location>
    <ligand>
        <name>Zn(2+)</name>
        <dbReference type="ChEBI" id="CHEBI:29105"/>
    </ligand>
</feature>
<feature type="binding site" evidence="1">
    <location>
        <position position="134"/>
    </location>
    <ligand>
        <name>Zn(2+)</name>
        <dbReference type="ChEBI" id="CHEBI:29105"/>
    </ligand>
</feature>
<feature type="binding site" evidence="1">
    <location>
        <position position="137"/>
    </location>
    <ligand>
        <name>Zn(2+)</name>
        <dbReference type="ChEBI" id="CHEBI:29105"/>
    </ligand>
</feature>
<name>PYRI_METM5</name>
<dbReference type="EMBL" id="CP000609">
    <property type="protein sequence ID" value="ABO34794.1"/>
    <property type="molecule type" value="Genomic_DNA"/>
</dbReference>
<dbReference type="RefSeq" id="WP_011868249.1">
    <property type="nucleotide sequence ID" value="NC_009135.1"/>
</dbReference>
<dbReference type="SMR" id="A4FX65"/>
<dbReference type="STRING" id="402880.MmarC5_0480"/>
<dbReference type="GeneID" id="4928960"/>
<dbReference type="KEGG" id="mmq:MmarC5_0480"/>
<dbReference type="eggNOG" id="arCOG04229">
    <property type="taxonomic scope" value="Archaea"/>
</dbReference>
<dbReference type="HOGENOM" id="CLU_128576_0_0_2"/>
<dbReference type="OrthoDB" id="7000at2157"/>
<dbReference type="Proteomes" id="UP000000253">
    <property type="component" value="Chromosome"/>
</dbReference>
<dbReference type="GO" id="GO:0009347">
    <property type="term" value="C:aspartate carbamoyltransferase complex"/>
    <property type="evidence" value="ECO:0007669"/>
    <property type="project" value="InterPro"/>
</dbReference>
<dbReference type="GO" id="GO:0046872">
    <property type="term" value="F:metal ion binding"/>
    <property type="evidence" value="ECO:0007669"/>
    <property type="project" value="UniProtKB-KW"/>
</dbReference>
<dbReference type="GO" id="GO:0006207">
    <property type="term" value="P:'de novo' pyrimidine nucleobase biosynthetic process"/>
    <property type="evidence" value="ECO:0007669"/>
    <property type="project" value="InterPro"/>
</dbReference>
<dbReference type="GO" id="GO:0006221">
    <property type="term" value="P:pyrimidine nucleotide biosynthetic process"/>
    <property type="evidence" value="ECO:0007669"/>
    <property type="project" value="UniProtKB-UniRule"/>
</dbReference>
<dbReference type="Gene3D" id="2.30.30.20">
    <property type="entry name" value="Aspartate carbamoyltransferase regulatory subunit, C-terminal domain"/>
    <property type="match status" value="1"/>
</dbReference>
<dbReference type="Gene3D" id="3.30.70.140">
    <property type="entry name" value="Aspartate carbamoyltransferase regulatory subunit, N-terminal domain"/>
    <property type="match status" value="1"/>
</dbReference>
<dbReference type="HAMAP" id="MF_00002">
    <property type="entry name" value="Asp_carb_tr_reg"/>
    <property type="match status" value="1"/>
</dbReference>
<dbReference type="InterPro" id="IPR020545">
    <property type="entry name" value="Asp_carbamoyltransf_reg_N"/>
</dbReference>
<dbReference type="InterPro" id="IPR002801">
    <property type="entry name" value="Asp_carbamoylTrfase_reg"/>
</dbReference>
<dbReference type="InterPro" id="IPR020542">
    <property type="entry name" value="Asp_carbamoyltrfase_reg_C"/>
</dbReference>
<dbReference type="InterPro" id="IPR036792">
    <property type="entry name" value="Asp_carbatrfase_reg_C_sf"/>
</dbReference>
<dbReference type="InterPro" id="IPR036793">
    <property type="entry name" value="Asp_carbatrfase_reg_N_sf"/>
</dbReference>
<dbReference type="NCBIfam" id="TIGR00240">
    <property type="entry name" value="ATCase_reg"/>
    <property type="match status" value="1"/>
</dbReference>
<dbReference type="PANTHER" id="PTHR35805">
    <property type="entry name" value="ASPARTATE CARBAMOYLTRANSFERASE REGULATORY CHAIN"/>
    <property type="match status" value="1"/>
</dbReference>
<dbReference type="PANTHER" id="PTHR35805:SF1">
    <property type="entry name" value="ASPARTATE CARBAMOYLTRANSFERASE REGULATORY CHAIN"/>
    <property type="match status" value="1"/>
</dbReference>
<dbReference type="Pfam" id="PF01948">
    <property type="entry name" value="PyrI"/>
    <property type="match status" value="1"/>
</dbReference>
<dbReference type="Pfam" id="PF02748">
    <property type="entry name" value="PyrI_C"/>
    <property type="match status" value="1"/>
</dbReference>
<dbReference type="SUPFAM" id="SSF57825">
    <property type="entry name" value="Aspartate carbamoyltransferase, Regulatory-chain, C-terminal domain"/>
    <property type="match status" value="1"/>
</dbReference>
<dbReference type="SUPFAM" id="SSF54893">
    <property type="entry name" value="Aspartate carbamoyltransferase, Regulatory-chain, N-terminal domain"/>
    <property type="match status" value="1"/>
</dbReference>
<protein>
    <recommendedName>
        <fullName evidence="1">Aspartate carbamoyltransferase regulatory chain</fullName>
    </recommendedName>
</protein>
<evidence type="ECO:0000255" key="1">
    <source>
        <dbReference type="HAMAP-Rule" id="MF_00002"/>
    </source>
</evidence>
<accession>A4FX65</accession>
<sequence length="148" mass="16676">MKMELKVKPIENGTVIDHISGSKALKVYKILNIEEKLPITLALNVPSKKGVMKDILKIEGLELTKDDVNKIALISPDATINIIKEGKVIKKFKVDLPKRIDGIIKCTNPNCITNKENIEGKFSIEQKNTLKIRCEYCEKFINSIIISK</sequence>
<proteinExistence type="inferred from homology"/>
<reference key="1">
    <citation type="submission" date="2007-03" db="EMBL/GenBank/DDBJ databases">
        <title>Complete sequence of chromosome of Methanococcus maripaludis C5.</title>
        <authorList>
            <consortium name="US DOE Joint Genome Institute"/>
            <person name="Copeland A."/>
            <person name="Lucas S."/>
            <person name="Lapidus A."/>
            <person name="Barry K."/>
            <person name="Glavina del Rio T."/>
            <person name="Dalin E."/>
            <person name="Tice H."/>
            <person name="Pitluck S."/>
            <person name="Chertkov O."/>
            <person name="Brettin T."/>
            <person name="Bruce D."/>
            <person name="Han C."/>
            <person name="Detter J.C."/>
            <person name="Schmutz J."/>
            <person name="Larimer F."/>
            <person name="Land M."/>
            <person name="Hauser L."/>
            <person name="Kyrpides N."/>
            <person name="Mikhailova N."/>
            <person name="Sieprawska-Lupa M."/>
            <person name="Whitman W.B."/>
            <person name="Richardson P."/>
        </authorList>
    </citation>
    <scope>NUCLEOTIDE SEQUENCE [LARGE SCALE GENOMIC DNA]</scope>
    <source>
        <strain>C5 / ATCC BAA-1333</strain>
    </source>
</reference>
<gene>
    <name evidence="1" type="primary">pyrI</name>
    <name type="ordered locus">MmarC5_0480</name>
</gene>